<protein>
    <recommendedName>
        <fullName evidence="1">3-dehydroquinate dehydratase</fullName>
        <shortName evidence="1">3-dehydroquinase</shortName>
        <ecNumber evidence="1">4.2.1.10</ecNumber>
    </recommendedName>
    <alternativeName>
        <fullName evidence="1">Type II DHQase</fullName>
    </alternativeName>
</protein>
<feature type="chain" id="PRO_1000118271" description="3-dehydroquinate dehydratase">
    <location>
        <begin position="1"/>
        <end position="148"/>
    </location>
</feature>
<feature type="active site" description="Proton acceptor" evidence="1">
    <location>
        <position position="23"/>
    </location>
</feature>
<feature type="active site" description="Proton donor" evidence="1">
    <location>
        <position position="100"/>
    </location>
</feature>
<feature type="binding site" evidence="1">
    <location>
        <position position="74"/>
    </location>
    <ligand>
        <name>substrate</name>
    </ligand>
</feature>
<feature type="binding site" evidence="1">
    <location>
        <position position="80"/>
    </location>
    <ligand>
        <name>substrate</name>
    </ligand>
</feature>
<feature type="binding site" evidence="1">
    <location>
        <position position="87"/>
    </location>
    <ligand>
        <name>substrate</name>
    </ligand>
</feature>
<feature type="binding site" evidence="1">
    <location>
        <begin position="101"/>
        <end position="102"/>
    </location>
    <ligand>
        <name>substrate</name>
    </ligand>
</feature>
<feature type="binding site" evidence="1">
    <location>
        <position position="111"/>
    </location>
    <ligand>
        <name>substrate</name>
    </ligand>
</feature>
<feature type="site" description="Transition state stabilizer" evidence="1">
    <location>
        <position position="18"/>
    </location>
</feature>
<name>AROQ_ANOFW</name>
<sequence length="148" mass="16464">MVRFLLLNGPNLNRLGMREPHIYGHTTLAQLEKQLTEFASEYAVELTCYQSNYEGALIDQIHRAESLYDGIIFNPGAFTHYSYALRDAIASIQTPVIEVHISNIHAREPFRHQSVLAPVTAGQIVGLGVNGYRLAILALLDMVEGKGK</sequence>
<proteinExistence type="inferred from homology"/>
<comment type="function">
    <text evidence="1">Catalyzes a trans-dehydration via an enolate intermediate.</text>
</comment>
<comment type="catalytic activity">
    <reaction evidence="1">
        <text>3-dehydroquinate = 3-dehydroshikimate + H2O</text>
        <dbReference type="Rhea" id="RHEA:21096"/>
        <dbReference type="ChEBI" id="CHEBI:15377"/>
        <dbReference type="ChEBI" id="CHEBI:16630"/>
        <dbReference type="ChEBI" id="CHEBI:32364"/>
        <dbReference type="EC" id="4.2.1.10"/>
    </reaction>
</comment>
<comment type="pathway">
    <text evidence="1">Metabolic intermediate biosynthesis; chorismate biosynthesis; chorismate from D-erythrose 4-phosphate and phosphoenolpyruvate: step 3/7.</text>
</comment>
<comment type="subunit">
    <text evidence="1">Homododecamer.</text>
</comment>
<comment type="similarity">
    <text evidence="1">Belongs to the type-II 3-dehydroquinase family.</text>
</comment>
<keyword id="KW-0028">Amino-acid biosynthesis</keyword>
<keyword id="KW-0057">Aromatic amino acid biosynthesis</keyword>
<keyword id="KW-0456">Lyase</keyword>
<gene>
    <name evidence="1" type="primary">aroQ</name>
    <name type="ordered locus">Aflv_0928</name>
</gene>
<evidence type="ECO:0000255" key="1">
    <source>
        <dbReference type="HAMAP-Rule" id="MF_00169"/>
    </source>
</evidence>
<organism>
    <name type="scientific">Anoxybacillus flavithermus (strain DSM 21510 / WK1)</name>
    <dbReference type="NCBI Taxonomy" id="491915"/>
    <lineage>
        <taxon>Bacteria</taxon>
        <taxon>Bacillati</taxon>
        <taxon>Bacillota</taxon>
        <taxon>Bacilli</taxon>
        <taxon>Bacillales</taxon>
        <taxon>Anoxybacillaceae</taxon>
        <taxon>Anoxybacillus</taxon>
    </lineage>
</organism>
<reference key="1">
    <citation type="journal article" date="2008" name="Genome Biol.">
        <title>Encapsulated in silica: genome, proteome and physiology of the thermophilic bacterium Anoxybacillus flavithermus WK1.</title>
        <authorList>
            <person name="Saw J.H."/>
            <person name="Mountain B.W."/>
            <person name="Feng L."/>
            <person name="Omelchenko M.V."/>
            <person name="Hou S."/>
            <person name="Saito J.A."/>
            <person name="Stott M.B."/>
            <person name="Li D."/>
            <person name="Zhao G."/>
            <person name="Wu J."/>
            <person name="Galperin M.Y."/>
            <person name="Koonin E.V."/>
            <person name="Makarova K.S."/>
            <person name="Wolf Y.I."/>
            <person name="Rigden D.J."/>
            <person name="Dunfield P.F."/>
            <person name="Wang L."/>
            <person name="Alam M."/>
        </authorList>
    </citation>
    <scope>NUCLEOTIDE SEQUENCE [LARGE SCALE GENOMIC DNA]</scope>
    <source>
        <strain>DSM 21510 / WK1</strain>
    </source>
</reference>
<accession>B7GHE3</accession>
<dbReference type="EC" id="4.2.1.10" evidence="1"/>
<dbReference type="EMBL" id="CP000922">
    <property type="protein sequence ID" value="ACJ33304.1"/>
    <property type="molecule type" value="Genomic_DNA"/>
</dbReference>
<dbReference type="RefSeq" id="WP_012574586.1">
    <property type="nucleotide sequence ID" value="NC_011567.1"/>
</dbReference>
<dbReference type="SMR" id="B7GHE3"/>
<dbReference type="STRING" id="491915.Aflv_0928"/>
<dbReference type="GeneID" id="7037185"/>
<dbReference type="KEGG" id="afl:Aflv_0928"/>
<dbReference type="PATRIC" id="fig|491915.6.peg.948"/>
<dbReference type="eggNOG" id="COG0757">
    <property type="taxonomic scope" value="Bacteria"/>
</dbReference>
<dbReference type="HOGENOM" id="CLU_090968_1_0_9"/>
<dbReference type="UniPathway" id="UPA00053">
    <property type="reaction ID" value="UER00086"/>
</dbReference>
<dbReference type="Proteomes" id="UP000000742">
    <property type="component" value="Chromosome"/>
</dbReference>
<dbReference type="GO" id="GO:0003855">
    <property type="term" value="F:3-dehydroquinate dehydratase activity"/>
    <property type="evidence" value="ECO:0007669"/>
    <property type="project" value="UniProtKB-UniRule"/>
</dbReference>
<dbReference type="GO" id="GO:0008652">
    <property type="term" value="P:amino acid biosynthetic process"/>
    <property type="evidence" value="ECO:0007669"/>
    <property type="project" value="UniProtKB-KW"/>
</dbReference>
<dbReference type="GO" id="GO:0009073">
    <property type="term" value="P:aromatic amino acid family biosynthetic process"/>
    <property type="evidence" value="ECO:0007669"/>
    <property type="project" value="UniProtKB-KW"/>
</dbReference>
<dbReference type="GO" id="GO:0009423">
    <property type="term" value="P:chorismate biosynthetic process"/>
    <property type="evidence" value="ECO:0007669"/>
    <property type="project" value="UniProtKB-UniRule"/>
</dbReference>
<dbReference type="GO" id="GO:0019631">
    <property type="term" value="P:quinate catabolic process"/>
    <property type="evidence" value="ECO:0007669"/>
    <property type="project" value="TreeGrafter"/>
</dbReference>
<dbReference type="CDD" id="cd00466">
    <property type="entry name" value="DHQase_II"/>
    <property type="match status" value="1"/>
</dbReference>
<dbReference type="Gene3D" id="3.40.50.9100">
    <property type="entry name" value="Dehydroquinase, class II"/>
    <property type="match status" value="1"/>
</dbReference>
<dbReference type="HAMAP" id="MF_00169">
    <property type="entry name" value="AroQ"/>
    <property type="match status" value="1"/>
</dbReference>
<dbReference type="InterPro" id="IPR001874">
    <property type="entry name" value="DHquinase_II"/>
</dbReference>
<dbReference type="InterPro" id="IPR018509">
    <property type="entry name" value="DHquinase_II_CS"/>
</dbReference>
<dbReference type="InterPro" id="IPR036441">
    <property type="entry name" value="DHquinase_II_sf"/>
</dbReference>
<dbReference type="NCBIfam" id="TIGR01088">
    <property type="entry name" value="aroQ"/>
    <property type="match status" value="1"/>
</dbReference>
<dbReference type="NCBIfam" id="NF003805">
    <property type="entry name" value="PRK05395.1-2"/>
    <property type="match status" value="1"/>
</dbReference>
<dbReference type="NCBIfam" id="NF003806">
    <property type="entry name" value="PRK05395.1-3"/>
    <property type="match status" value="1"/>
</dbReference>
<dbReference type="NCBIfam" id="NF003807">
    <property type="entry name" value="PRK05395.1-4"/>
    <property type="match status" value="1"/>
</dbReference>
<dbReference type="PANTHER" id="PTHR21272">
    <property type="entry name" value="CATABOLIC 3-DEHYDROQUINASE"/>
    <property type="match status" value="1"/>
</dbReference>
<dbReference type="PANTHER" id="PTHR21272:SF3">
    <property type="entry name" value="CATABOLIC 3-DEHYDROQUINASE"/>
    <property type="match status" value="1"/>
</dbReference>
<dbReference type="Pfam" id="PF01220">
    <property type="entry name" value="DHquinase_II"/>
    <property type="match status" value="1"/>
</dbReference>
<dbReference type="PIRSF" id="PIRSF001399">
    <property type="entry name" value="DHquinase_II"/>
    <property type="match status" value="1"/>
</dbReference>
<dbReference type="SUPFAM" id="SSF52304">
    <property type="entry name" value="Type II 3-dehydroquinate dehydratase"/>
    <property type="match status" value="1"/>
</dbReference>
<dbReference type="PROSITE" id="PS01029">
    <property type="entry name" value="DEHYDROQUINASE_II"/>
    <property type="match status" value="1"/>
</dbReference>